<comment type="function">
    <text evidence="1">Provides the rickettsial cell with host ATP in exchange for rickettsial ADP. This is an obligate exchange system. This energy acquiring activity is an important component of rickettsial parasitism (By similarity).</text>
</comment>
<comment type="subcellular location">
    <subcellularLocation>
        <location>Cell membrane</location>
        <topology>Multi-pass membrane protein</topology>
    </subcellularLocation>
</comment>
<comment type="similarity">
    <text evidence="3">Belongs to the ADP/ATP translocase tlc family.</text>
</comment>
<evidence type="ECO:0000250" key="1"/>
<evidence type="ECO:0000255" key="2"/>
<evidence type="ECO:0000305" key="3"/>
<feature type="chain" id="PRO_0000286478" description="ADP,ATP carrier protein 5">
    <location>
        <begin position="1"/>
        <end position="499"/>
    </location>
</feature>
<feature type="transmembrane region" description="Helical" evidence="2">
    <location>
        <begin position="25"/>
        <end position="45"/>
    </location>
</feature>
<feature type="transmembrane region" description="Helical" evidence="2">
    <location>
        <begin position="61"/>
        <end position="81"/>
    </location>
</feature>
<feature type="transmembrane region" description="Helical" evidence="2">
    <location>
        <begin position="93"/>
        <end position="113"/>
    </location>
</feature>
<feature type="transmembrane region" description="Helical" evidence="2">
    <location>
        <begin position="148"/>
        <end position="168"/>
    </location>
</feature>
<feature type="transmembrane region" description="Helical" evidence="2">
    <location>
        <begin position="183"/>
        <end position="203"/>
    </location>
</feature>
<feature type="transmembrane region" description="Helical" evidence="2">
    <location>
        <begin position="223"/>
        <end position="243"/>
    </location>
</feature>
<feature type="transmembrane region" description="Helical" evidence="2">
    <location>
        <begin position="286"/>
        <end position="306"/>
    </location>
</feature>
<feature type="transmembrane region" description="Helical" evidence="2">
    <location>
        <begin position="327"/>
        <end position="347"/>
    </location>
</feature>
<feature type="transmembrane region" description="Helical" evidence="2">
    <location>
        <begin position="356"/>
        <end position="376"/>
    </location>
</feature>
<feature type="transmembrane region" description="Helical" evidence="2">
    <location>
        <begin position="380"/>
        <end position="400"/>
    </location>
</feature>
<feature type="transmembrane region" description="Helical" evidence="2">
    <location>
        <begin position="468"/>
        <end position="488"/>
    </location>
</feature>
<reference key="1">
    <citation type="journal article" date="2001" name="Science">
        <title>Mechanisms of evolution in Rickettsia conorii and R. prowazekii.</title>
        <authorList>
            <person name="Ogata H."/>
            <person name="Audic S."/>
            <person name="Renesto-Audiffren P."/>
            <person name="Fournier P.-E."/>
            <person name="Barbe V."/>
            <person name="Samson D."/>
            <person name="Roux V."/>
            <person name="Cossart P."/>
            <person name="Weissenbach J."/>
            <person name="Claverie J.-M."/>
            <person name="Raoult D."/>
        </authorList>
    </citation>
    <scope>NUCLEOTIDE SEQUENCE [LARGE SCALE GENOMIC DNA]</scope>
    <source>
        <strain>ATCC VR-613 / Malish 7</strain>
    </source>
</reference>
<organism>
    <name type="scientific">Rickettsia conorii (strain ATCC VR-613 / Malish 7)</name>
    <dbReference type="NCBI Taxonomy" id="272944"/>
    <lineage>
        <taxon>Bacteria</taxon>
        <taxon>Pseudomonadati</taxon>
        <taxon>Pseudomonadota</taxon>
        <taxon>Alphaproteobacteria</taxon>
        <taxon>Rickettsiales</taxon>
        <taxon>Rickettsiaceae</taxon>
        <taxon>Rickettsieae</taxon>
        <taxon>Rickettsia</taxon>
        <taxon>spotted fever group</taxon>
    </lineage>
</organism>
<name>TLCE_RICCN</name>
<sequence>MLSTSSRSFKNKFRAAFWPVHNYELGKFIPMSTLMFCILFNQNVLRILKDSILISEISAEIAGFAKVYCVTPAAALFVIIYAKMINYLTFEKIFYYLSAFFISFFVLFTFVIYPNIHIFHVHPNNLADWMERYPHFKWYISLVGNWGYIVYYSLAELWPNIFYVLLFWQFANELTTTEEAKRFYTLFSLFGNSSLILVGFLMMNLSSEDTIIKKFMSISDSKITLVQVSTTIVAIVAIICCLLVRFISKNVFTNPLFYAKAKSGRSTSERMGLIKSFKYIAKSKYLWLLLICSAAFGFAINLVEAVWKAKIKELYPTVNTYAEFNSLYILWTGVAIMVMTIIGNNIMRMHNWFVAAVISPVIIMVTGILFFVLIVFDQQILSLFDGAILMSPLALAVSIGGIQNILAKGTKYSIWDTSREMLYIPLDEELKTKGKAAVDVISAKVGKSSSGLVQSIIFTLVPTATFTLISPILMVVFTFVCLAWIYAVRKIYCEYQKIA</sequence>
<protein>
    <recommendedName>
        <fullName>ADP,ATP carrier protein 5</fullName>
    </recommendedName>
    <alternativeName>
        <fullName>ADP/ATP translocase 5</fullName>
    </alternativeName>
</protein>
<keyword id="KW-0067">ATP-binding</keyword>
<keyword id="KW-1003">Cell membrane</keyword>
<keyword id="KW-0472">Membrane</keyword>
<keyword id="KW-0547">Nucleotide-binding</keyword>
<keyword id="KW-0812">Transmembrane</keyword>
<keyword id="KW-1133">Transmembrane helix</keyword>
<keyword id="KW-0813">Transport</keyword>
<gene>
    <name type="primary">tlcE</name>
    <name type="synonym">tlc5</name>
    <name type="ordered locus">RC1138</name>
</gene>
<proteinExistence type="inferred from homology"/>
<accession>Q92GI5</accession>
<dbReference type="EMBL" id="AE006914">
    <property type="protein sequence ID" value="AAL03676.1"/>
    <property type="molecule type" value="Genomic_DNA"/>
</dbReference>
<dbReference type="PIR" id="B97842">
    <property type="entry name" value="B97842"/>
</dbReference>
<dbReference type="RefSeq" id="WP_010977709.1">
    <property type="nucleotide sequence ID" value="NC_003103.1"/>
</dbReference>
<dbReference type="GeneID" id="928287"/>
<dbReference type="KEGG" id="rco:RC1138"/>
<dbReference type="PATRIC" id="fig|272944.4.peg.1310"/>
<dbReference type="HOGENOM" id="CLU_023964_0_1_5"/>
<dbReference type="Proteomes" id="UP000000816">
    <property type="component" value="Chromosome"/>
</dbReference>
<dbReference type="GO" id="GO:0005886">
    <property type="term" value="C:plasma membrane"/>
    <property type="evidence" value="ECO:0007669"/>
    <property type="project" value="UniProtKB-SubCell"/>
</dbReference>
<dbReference type="GO" id="GO:0005524">
    <property type="term" value="F:ATP binding"/>
    <property type="evidence" value="ECO:0007669"/>
    <property type="project" value="UniProtKB-KW"/>
</dbReference>
<dbReference type="GO" id="GO:0005471">
    <property type="term" value="F:ATP:ADP antiporter activity"/>
    <property type="evidence" value="ECO:0007669"/>
    <property type="project" value="InterPro"/>
</dbReference>
<dbReference type="InterPro" id="IPR004667">
    <property type="entry name" value="ADP_ATP_car_bac_type"/>
</dbReference>
<dbReference type="NCBIfam" id="TIGR00769">
    <property type="entry name" value="AAA"/>
    <property type="match status" value="1"/>
</dbReference>
<dbReference type="PANTHER" id="PTHR31187">
    <property type="match status" value="1"/>
</dbReference>
<dbReference type="PANTHER" id="PTHR31187:SF1">
    <property type="entry name" value="ADP,ATP CARRIER PROTEIN 1"/>
    <property type="match status" value="1"/>
</dbReference>
<dbReference type="Pfam" id="PF03219">
    <property type="entry name" value="TLC"/>
    <property type="match status" value="1"/>
</dbReference>